<keyword id="KW-0002">3D-structure</keyword>
<keyword id="KW-0007">Acetylation</keyword>
<keyword id="KW-0963">Cytoplasm</keyword>
<keyword id="KW-0552">Olfaction</keyword>
<keyword id="KW-1185">Reference proteome</keyword>
<keyword id="KW-0716">Sensory transduction</keyword>
<sequence length="163" mass="18867">MAEDGPQKQQLEMPLVLDQDLTQQMRLRVESLKQRGEKKQDGEKLIRPAESVYRLDFIQQQKLQFDHWNVVLDKPGKVTITGTSQNWTPDLTNLMTRQLLDPAAIFWRKEDSDAMDWNEADALEFGERLSDLAKIRKVMYFLITFGEGVEPANLKASVVFNQL</sequence>
<proteinExistence type="evidence at protein level"/>
<organism>
    <name type="scientific">Mus musculus</name>
    <name type="common">Mouse</name>
    <dbReference type="NCBI Taxonomy" id="10090"/>
    <lineage>
        <taxon>Eukaryota</taxon>
        <taxon>Metazoa</taxon>
        <taxon>Chordata</taxon>
        <taxon>Craniata</taxon>
        <taxon>Vertebrata</taxon>
        <taxon>Euteleostomi</taxon>
        <taxon>Mammalia</taxon>
        <taxon>Eutheria</taxon>
        <taxon>Euarchontoglires</taxon>
        <taxon>Glires</taxon>
        <taxon>Rodentia</taxon>
        <taxon>Myomorpha</taxon>
        <taxon>Muroidea</taxon>
        <taxon>Muridae</taxon>
        <taxon>Murinae</taxon>
        <taxon>Mus</taxon>
        <taxon>Mus</taxon>
    </lineage>
</organism>
<feature type="initiator methionine" description="Removed" evidence="2">
    <location>
        <position position="1"/>
    </location>
</feature>
<feature type="chain" id="PRO_0000058045" description="Olfactory marker protein">
    <location>
        <begin position="2"/>
        <end position="163"/>
    </location>
</feature>
<feature type="modified residue" description="N-acetylalanine" evidence="2">
    <location>
        <position position="2"/>
    </location>
</feature>
<feature type="strand" evidence="6">
    <location>
        <begin position="10"/>
        <end position="14"/>
    </location>
</feature>
<feature type="helix" evidence="6">
    <location>
        <begin position="19"/>
        <end position="34"/>
    </location>
</feature>
<feature type="strand" evidence="6">
    <location>
        <begin position="50"/>
        <end position="56"/>
    </location>
</feature>
<feature type="strand" evidence="6">
    <location>
        <begin position="61"/>
        <end position="83"/>
    </location>
</feature>
<feature type="turn" evidence="6">
    <location>
        <begin position="89"/>
        <end position="91"/>
    </location>
</feature>
<feature type="helix" evidence="6">
    <location>
        <begin position="96"/>
        <end position="98"/>
    </location>
</feature>
<feature type="strand" evidence="6">
    <location>
        <begin position="104"/>
        <end position="108"/>
    </location>
</feature>
<feature type="strand" evidence="7">
    <location>
        <begin position="110"/>
        <end position="112"/>
    </location>
</feature>
<feature type="strand" evidence="6">
    <location>
        <begin position="115"/>
        <end position="117"/>
    </location>
</feature>
<feature type="helix" evidence="6">
    <location>
        <begin position="119"/>
        <end position="135"/>
    </location>
</feature>
<feature type="strand" evidence="6">
    <location>
        <begin position="137"/>
        <end position="145"/>
    </location>
</feature>
<feature type="helix" evidence="6">
    <location>
        <begin position="151"/>
        <end position="153"/>
    </location>
</feature>
<feature type="strand" evidence="6">
    <location>
        <begin position="154"/>
        <end position="162"/>
    </location>
</feature>
<comment type="function">
    <text>May act as a modulator of the olfactory signal-transduction cascade.</text>
</comment>
<comment type="subunit">
    <text evidence="3 4">Interacts with BEX1 and BEX2.</text>
</comment>
<comment type="subcellular location">
    <subcellularLocation>
        <location evidence="1">Cytoplasm</location>
    </subcellularLocation>
</comment>
<comment type="tissue specificity">
    <text>Uniquely associated with mature olfactory receptor neurons.</text>
</comment>
<comment type="similarity">
    <text evidence="5">Belongs to the olfactory marker protein family.</text>
</comment>
<reference key="1">
    <citation type="journal article" date="1994" name="Mamm. Genome">
        <title>Sequencing of the olfactory marker protein gene in normal and shaker-1 mutant mice.</title>
        <authorList>
            <person name="Brown K.A."/>
            <person name="Sutcliffe M.J."/>
            <person name="Steele K."/>
            <person name="Brown S.D."/>
        </authorList>
    </citation>
    <scope>NUCLEOTIDE SEQUENCE</scope>
</reference>
<reference key="2">
    <citation type="journal article" date="1994" name="Genomics">
        <title>Human and rodent OMP genes: conservation of structural and regulatory motifs and cellular localization.</title>
        <authorList>
            <person name="Buiakova O.I."/>
            <person name="Rama Krishna N.S."/>
            <person name="Getchell T.V."/>
            <person name="Margolis F.L."/>
        </authorList>
    </citation>
    <scope>NUCLEOTIDE SEQUENCE [GENOMIC DNA]</scope>
    <source>
        <strain>129</strain>
    </source>
</reference>
<reference key="3">
    <citation type="journal article" date="2004" name="Genome Res.">
        <title>The status, quality, and expansion of the NIH full-length cDNA project: the Mammalian Gene Collection (MGC).</title>
        <authorList>
            <consortium name="The MGC Project Team"/>
        </authorList>
    </citation>
    <scope>NUCLEOTIDE SEQUENCE [LARGE SCALE MRNA]</scope>
    <source>
        <tissue>Olfactory epithelium</tissue>
    </source>
</reference>
<reference key="4">
    <citation type="journal article" date="2003" name="J. Neurochem.">
        <title>Identification of members of the Bex gene family as olfactory marker protein (OMP) binding partners.</title>
        <authorList>
            <person name="Behrens M."/>
            <person name="Margolis J.W."/>
            <person name="Margolis F.L."/>
        </authorList>
    </citation>
    <scope>INTERACTION WITH BEX1 AND BEX2</scope>
</reference>
<reference key="5">
    <citation type="journal article" date="2004" name="J. Neurochem.">
        <title>The interaction of Bex and OMP reveals a dimer of OMP with a short half-life.</title>
        <authorList>
            <person name="Koo J.H."/>
            <person name="Gill S."/>
            <person name="Pannell L.K."/>
            <person name="Menco B.P.M."/>
            <person name="Margolis J.W."/>
            <person name="Margolis F.L."/>
        </authorList>
    </citation>
    <scope>INTERACTION WITH BEX1 AND BEX2</scope>
</reference>
<reference key="6">
    <citation type="journal article" date="2002" name="J. Mol. Biol.">
        <title>The crystal structure of the olfactory marker protein at 2.3 A resolution.</title>
        <authorList>
            <person name="Smith P.C."/>
            <person name="Firestein S."/>
            <person name="Hunt J.F."/>
        </authorList>
    </citation>
    <scope>X-RAY CRYSTALLOGRAPHY (2.3 ANGSTROMS)</scope>
</reference>
<accession>Q64288</accession>
<dbReference type="EMBL" id="U02557">
    <property type="protein sequence ID" value="AAA18415.1"/>
    <property type="molecule type" value="Unassigned_DNA"/>
</dbReference>
<dbReference type="EMBL" id="U01213">
    <property type="protein sequence ID" value="AAA20486.1"/>
    <property type="molecule type" value="Genomic_DNA"/>
</dbReference>
<dbReference type="EMBL" id="BC046600">
    <property type="protein sequence ID" value="AAH46600.1"/>
    <property type="molecule type" value="mRNA"/>
</dbReference>
<dbReference type="CCDS" id="CCDS21466.1"/>
<dbReference type="PIR" id="B54261">
    <property type="entry name" value="B54261"/>
</dbReference>
<dbReference type="RefSeq" id="NP_035140.1">
    <property type="nucleotide sequence ID" value="NM_011010.2"/>
</dbReference>
<dbReference type="PDB" id="1F35">
    <property type="method" value="X-ray"/>
    <property type="resolution" value="2.30 A"/>
    <property type="chains" value="A/B=2-163"/>
</dbReference>
<dbReference type="PDB" id="1JOB">
    <property type="method" value="X-ray"/>
    <property type="resolution" value="2.40 A"/>
    <property type="chains" value="A=2-163"/>
</dbReference>
<dbReference type="PDB" id="1JOD">
    <property type="method" value="X-ray"/>
    <property type="resolution" value="3.20 A"/>
    <property type="chains" value="A/B=2-163"/>
</dbReference>
<dbReference type="PDBsum" id="1F35"/>
<dbReference type="PDBsum" id="1JOB"/>
<dbReference type="PDBsum" id="1JOD"/>
<dbReference type="BMRB" id="Q64288"/>
<dbReference type="SMR" id="Q64288"/>
<dbReference type="FunCoup" id="Q64288">
    <property type="interactions" value="170"/>
</dbReference>
<dbReference type="MINT" id="Q64288"/>
<dbReference type="STRING" id="10090.ENSMUSP00000095882"/>
<dbReference type="iPTMnet" id="Q64288"/>
<dbReference type="PhosphoSitePlus" id="Q64288"/>
<dbReference type="PaxDb" id="10090-ENSMUSP00000095882"/>
<dbReference type="ProteomicsDB" id="289989"/>
<dbReference type="Antibodypedia" id="52917">
    <property type="antibodies" value="179 antibodies from 27 providers"/>
</dbReference>
<dbReference type="Ensembl" id="ENSMUST00000098281.4">
    <property type="protein sequence ID" value="ENSMUSP00000095882.3"/>
    <property type="gene ID" value="ENSMUSG00000074006.4"/>
</dbReference>
<dbReference type="GeneID" id="18378"/>
<dbReference type="KEGG" id="mmu:18378"/>
<dbReference type="UCSC" id="uc009ike.1">
    <property type="organism name" value="mouse"/>
</dbReference>
<dbReference type="AGR" id="MGI:97436"/>
<dbReference type="CTD" id="4975"/>
<dbReference type="MGI" id="MGI:97436">
    <property type="gene designation" value="Omp"/>
</dbReference>
<dbReference type="VEuPathDB" id="HostDB:ENSMUSG00000074006"/>
<dbReference type="eggNOG" id="ENOG502S0KQ">
    <property type="taxonomic scope" value="Eukaryota"/>
</dbReference>
<dbReference type="GeneTree" id="ENSGT00390000009497"/>
<dbReference type="HOGENOM" id="CLU_1834469_0_0_1"/>
<dbReference type="InParanoid" id="Q64288"/>
<dbReference type="OMA" id="LRFSHWT"/>
<dbReference type="OrthoDB" id="9867220at2759"/>
<dbReference type="PhylomeDB" id="Q64288"/>
<dbReference type="TreeFam" id="TF330820"/>
<dbReference type="BioGRID-ORCS" id="18378">
    <property type="hits" value="1 hit in 75 CRISPR screens"/>
</dbReference>
<dbReference type="EvolutionaryTrace" id="Q64288"/>
<dbReference type="PRO" id="PR:Q64288"/>
<dbReference type="Proteomes" id="UP000000589">
    <property type="component" value="Chromosome 7"/>
</dbReference>
<dbReference type="RNAct" id="Q64288">
    <property type="molecule type" value="protein"/>
</dbReference>
<dbReference type="Bgee" id="ENSMUSG00000074006">
    <property type="expression patterns" value="Expressed in olfactory bulb and 49 other cell types or tissues"/>
</dbReference>
<dbReference type="ExpressionAtlas" id="Q64288">
    <property type="expression patterns" value="baseline and differential"/>
</dbReference>
<dbReference type="GO" id="GO:0030424">
    <property type="term" value="C:axon"/>
    <property type="evidence" value="ECO:0000314"/>
    <property type="project" value="MGI"/>
</dbReference>
<dbReference type="GO" id="GO:0005737">
    <property type="term" value="C:cytoplasm"/>
    <property type="evidence" value="ECO:0000314"/>
    <property type="project" value="MGI"/>
</dbReference>
<dbReference type="GO" id="GO:0005829">
    <property type="term" value="C:cytosol"/>
    <property type="evidence" value="ECO:0000314"/>
    <property type="project" value="MGI"/>
</dbReference>
<dbReference type="GO" id="GO:0043025">
    <property type="term" value="C:neuronal cell body"/>
    <property type="evidence" value="ECO:0000314"/>
    <property type="project" value="MGI"/>
</dbReference>
<dbReference type="GO" id="GO:0005634">
    <property type="term" value="C:nucleus"/>
    <property type="evidence" value="ECO:0000314"/>
    <property type="project" value="MGI"/>
</dbReference>
<dbReference type="GO" id="GO:0022008">
    <property type="term" value="P:neurogenesis"/>
    <property type="evidence" value="ECO:0000314"/>
    <property type="project" value="MGI"/>
</dbReference>
<dbReference type="GO" id="GO:0007608">
    <property type="term" value="P:sensory perception of smell"/>
    <property type="evidence" value="ECO:0000315"/>
    <property type="project" value="MGI"/>
</dbReference>
<dbReference type="GO" id="GO:0007165">
    <property type="term" value="P:signal transduction"/>
    <property type="evidence" value="ECO:0007669"/>
    <property type="project" value="InterPro"/>
</dbReference>
<dbReference type="FunFam" id="2.60.120.390:FF:000001">
    <property type="entry name" value="Olfactory marker protein"/>
    <property type="match status" value="1"/>
</dbReference>
<dbReference type="Gene3D" id="2.60.120.390">
    <property type="entry name" value="Olfactory marker"/>
    <property type="match status" value="1"/>
</dbReference>
<dbReference type="InterPro" id="IPR009103">
    <property type="entry name" value="Olfactory_marker"/>
</dbReference>
<dbReference type="InterPro" id="IPR036727">
    <property type="entry name" value="Olfactory_marker_sf"/>
</dbReference>
<dbReference type="PANTHER" id="PTHR15357">
    <property type="entry name" value="OLFACTORY MARKER PROTEIN"/>
    <property type="match status" value="1"/>
</dbReference>
<dbReference type="PANTHER" id="PTHR15357:SF0">
    <property type="entry name" value="OLFACTORY MARKER PROTEIN"/>
    <property type="match status" value="1"/>
</dbReference>
<dbReference type="Pfam" id="PF06554">
    <property type="entry name" value="Olfactory_mark"/>
    <property type="match status" value="1"/>
</dbReference>
<dbReference type="SUPFAM" id="SSF63697">
    <property type="entry name" value="Olfactory marker protein"/>
    <property type="match status" value="1"/>
</dbReference>
<gene>
    <name type="primary">Omp</name>
</gene>
<evidence type="ECO:0000250" key="1"/>
<evidence type="ECO:0000250" key="2">
    <source>
        <dbReference type="UniProtKB" id="P08523"/>
    </source>
</evidence>
<evidence type="ECO:0000269" key="3">
    <source>
    </source>
</evidence>
<evidence type="ECO:0000269" key="4">
    <source>
    </source>
</evidence>
<evidence type="ECO:0000305" key="5"/>
<evidence type="ECO:0007829" key="6">
    <source>
        <dbReference type="PDB" id="1F35"/>
    </source>
</evidence>
<evidence type="ECO:0007829" key="7">
    <source>
        <dbReference type="PDB" id="1JOD"/>
    </source>
</evidence>
<protein>
    <recommendedName>
        <fullName>Olfactory marker protein</fullName>
    </recommendedName>
</protein>
<name>OMP_MOUSE</name>